<proteinExistence type="inferred from homology"/>
<reference key="1">
    <citation type="journal article" date="1994" name="Biochim. Biophys. Acta">
        <title>Sequence analysis of 12 structural genes and a novel non-coding region from mitochondrial DNA of Atlantic cod, Gadus morhua.</title>
        <authorList>
            <person name="Johansen S."/>
            <person name="Johansen T."/>
        </authorList>
    </citation>
    <scope>NUCLEOTIDE SEQUENCE [GENOMIC DNA]</scope>
    <source>
        <strain>Norwegian coastal 1</strain>
    </source>
</reference>
<reference key="2">
    <citation type="journal article" date="1996" name="Mol. Mar. Biol. Biotechnol.">
        <title>The complete mitochondrial DNA sequence of Atlantic cod (Gadus morhua): relevance to taxonomic studies among codfishes.</title>
        <authorList>
            <person name="Johansen S."/>
            <person name="Bakke I."/>
        </authorList>
    </citation>
    <scope>NUCLEOTIDE SEQUENCE [GENOMIC DNA]</scope>
    <source>
        <strain>Norwegian coastal 1</strain>
    </source>
</reference>
<evidence type="ECO:0000250" key="1">
    <source>
        <dbReference type="UniProtKB" id="P00395"/>
    </source>
</evidence>
<evidence type="ECO:0000250" key="2">
    <source>
        <dbReference type="UniProtKB" id="P00396"/>
    </source>
</evidence>
<evidence type="ECO:0000250" key="3">
    <source>
        <dbReference type="UniProtKB" id="P00401"/>
    </source>
</evidence>
<evidence type="ECO:0000305" key="4"/>
<gene>
    <name type="primary">mt-co1</name>
    <name type="synonym">coi</name>
    <name type="synonym">coxi</name>
    <name type="synonym">mtco1</name>
</gene>
<organism>
    <name type="scientific">Gadus morhua</name>
    <name type="common">Atlantic cod</name>
    <dbReference type="NCBI Taxonomy" id="8049"/>
    <lineage>
        <taxon>Eukaryota</taxon>
        <taxon>Metazoa</taxon>
        <taxon>Chordata</taxon>
        <taxon>Craniata</taxon>
        <taxon>Vertebrata</taxon>
        <taxon>Euteleostomi</taxon>
        <taxon>Actinopterygii</taxon>
        <taxon>Neopterygii</taxon>
        <taxon>Teleostei</taxon>
        <taxon>Neoteleostei</taxon>
        <taxon>Acanthomorphata</taxon>
        <taxon>Zeiogadaria</taxon>
        <taxon>Gadariae</taxon>
        <taxon>Gadiformes</taxon>
        <taxon>Gadoidei</taxon>
        <taxon>Gadidae</taxon>
        <taxon>Gadus</taxon>
    </lineage>
</organism>
<accession>Q36775</accession>
<name>COX1_GADMO</name>
<geneLocation type="mitochondrion"/>
<feature type="chain" id="PRO_0000183335" description="Cytochrome c oxidase subunit 1">
    <location>
        <begin position="1"/>
        <end position="516"/>
    </location>
</feature>
<feature type="topological domain" description="Mitochondrial matrix" evidence="2">
    <location>
        <begin position="1"/>
        <end position="11"/>
    </location>
</feature>
<feature type="transmembrane region" description="Helical; Name=I" evidence="2">
    <location>
        <begin position="12"/>
        <end position="40"/>
    </location>
</feature>
<feature type="topological domain" description="Mitochondrial intermembrane" evidence="2">
    <location>
        <begin position="41"/>
        <end position="50"/>
    </location>
</feature>
<feature type="transmembrane region" description="Helical; Name=II" evidence="2">
    <location>
        <begin position="51"/>
        <end position="86"/>
    </location>
</feature>
<feature type="topological domain" description="Mitochondrial matrix" evidence="2">
    <location>
        <begin position="87"/>
        <end position="94"/>
    </location>
</feature>
<feature type="transmembrane region" description="Helical; Name=III" evidence="2">
    <location>
        <begin position="95"/>
        <end position="117"/>
    </location>
</feature>
<feature type="topological domain" description="Mitochondrial intermembrane" evidence="2">
    <location>
        <begin position="118"/>
        <end position="140"/>
    </location>
</feature>
<feature type="transmembrane region" description="Helical; Name=IV" evidence="2">
    <location>
        <begin position="141"/>
        <end position="170"/>
    </location>
</feature>
<feature type="topological domain" description="Mitochondrial matrix" evidence="2">
    <location>
        <begin position="171"/>
        <end position="182"/>
    </location>
</feature>
<feature type="transmembrane region" description="Helical; Name=V" evidence="2">
    <location>
        <begin position="183"/>
        <end position="212"/>
    </location>
</feature>
<feature type="topological domain" description="Mitochondrial intermembrane" evidence="2">
    <location>
        <begin position="213"/>
        <end position="227"/>
    </location>
</feature>
<feature type="transmembrane region" description="Helical; Name=VI" evidence="2">
    <location>
        <begin position="228"/>
        <end position="261"/>
    </location>
</feature>
<feature type="topological domain" description="Mitochondrial matrix" evidence="2">
    <location>
        <begin position="262"/>
        <end position="269"/>
    </location>
</feature>
<feature type="transmembrane region" description="Helical; Name=VII" evidence="2">
    <location>
        <begin position="270"/>
        <end position="286"/>
    </location>
</feature>
<feature type="topological domain" description="Mitochondrial intermembrane" evidence="2">
    <location>
        <begin position="287"/>
        <end position="298"/>
    </location>
</feature>
<feature type="transmembrane region" description="Helical; Name=VIII" evidence="2">
    <location>
        <begin position="299"/>
        <end position="327"/>
    </location>
</feature>
<feature type="topological domain" description="Mitochondrial matrix" evidence="2">
    <location>
        <begin position="328"/>
        <end position="335"/>
    </location>
</feature>
<feature type="transmembrane region" description="Helical; Name=IX" evidence="2">
    <location>
        <begin position="336"/>
        <end position="357"/>
    </location>
</feature>
<feature type="topological domain" description="Mitochondrial intermembrane" evidence="2">
    <location>
        <begin position="358"/>
        <end position="370"/>
    </location>
</feature>
<feature type="transmembrane region" description="Helical; Name=X" evidence="2">
    <location>
        <begin position="371"/>
        <end position="400"/>
    </location>
</feature>
<feature type="topological domain" description="Mitochondrial matrix" evidence="2">
    <location>
        <begin position="401"/>
        <end position="406"/>
    </location>
</feature>
<feature type="transmembrane region" description="Helical; Name=XI" evidence="2">
    <location>
        <begin position="407"/>
        <end position="433"/>
    </location>
</feature>
<feature type="topological domain" description="Mitochondrial intermembrane" evidence="2">
    <location>
        <begin position="434"/>
        <end position="446"/>
    </location>
</feature>
<feature type="transmembrane region" description="Helical; Name=XII" evidence="2">
    <location>
        <begin position="447"/>
        <end position="478"/>
    </location>
</feature>
<feature type="topological domain" description="Mitochondrial matrix" evidence="2">
    <location>
        <begin position="479"/>
        <end position="516"/>
    </location>
</feature>
<feature type="binding site" evidence="2">
    <location>
        <position position="40"/>
    </location>
    <ligand>
        <name>Na(+)</name>
        <dbReference type="ChEBI" id="CHEBI:29101"/>
    </ligand>
</feature>
<feature type="binding site" evidence="2">
    <location>
        <position position="45"/>
    </location>
    <ligand>
        <name>Na(+)</name>
        <dbReference type="ChEBI" id="CHEBI:29101"/>
    </ligand>
</feature>
<feature type="binding site" description="axial binding residue" evidence="2">
    <location>
        <position position="61"/>
    </location>
    <ligand>
        <name>Fe(II)-heme a</name>
        <dbReference type="ChEBI" id="CHEBI:61715"/>
        <note>low-spin</note>
    </ligand>
    <ligandPart>
        <name>Fe</name>
        <dbReference type="ChEBI" id="CHEBI:18248"/>
    </ligandPart>
</feature>
<feature type="binding site" evidence="2">
    <location>
        <position position="240"/>
    </location>
    <ligand>
        <name>Cu cation</name>
        <dbReference type="ChEBI" id="CHEBI:23378"/>
        <label>B</label>
    </ligand>
</feature>
<feature type="binding site" evidence="2">
    <location>
        <position position="244"/>
    </location>
    <ligand>
        <name>O2</name>
        <dbReference type="ChEBI" id="CHEBI:15379"/>
    </ligand>
</feature>
<feature type="binding site" evidence="2">
    <location>
        <position position="290"/>
    </location>
    <ligand>
        <name>Cu cation</name>
        <dbReference type="ChEBI" id="CHEBI:23378"/>
        <label>B</label>
    </ligand>
</feature>
<feature type="binding site" evidence="2">
    <location>
        <position position="291"/>
    </location>
    <ligand>
        <name>Cu cation</name>
        <dbReference type="ChEBI" id="CHEBI:23378"/>
        <label>B</label>
    </ligand>
</feature>
<feature type="binding site" evidence="2">
    <location>
        <position position="368"/>
    </location>
    <ligand>
        <name>Mg(2+)</name>
        <dbReference type="ChEBI" id="CHEBI:18420"/>
        <note>ligand shared with MT-CO2</note>
    </ligand>
</feature>
<feature type="binding site" evidence="2">
    <location>
        <position position="369"/>
    </location>
    <ligand>
        <name>Mg(2+)</name>
        <dbReference type="ChEBI" id="CHEBI:18420"/>
        <note>ligand shared with MT-CO2</note>
    </ligand>
</feature>
<feature type="binding site" description="axial binding residue" evidence="2">
    <location>
        <position position="376"/>
    </location>
    <ligand>
        <name>heme a3</name>
        <dbReference type="ChEBI" id="CHEBI:83282"/>
        <note>high-spin</note>
    </ligand>
    <ligandPart>
        <name>Fe</name>
        <dbReference type="ChEBI" id="CHEBI:18248"/>
    </ligandPart>
</feature>
<feature type="binding site" description="axial binding residue" evidence="2">
    <location>
        <position position="378"/>
    </location>
    <ligand>
        <name>Fe(II)-heme a</name>
        <dbReference type="ChEBI" id="CHEBI:61715"/>
        <note>low-spin</note>
    </ligand>
    <ligandPart>
        <name>Fe</name>
        <dbReference type="ChEBI" id="CHEBI:18248"/>
    </ligandPart>
</feature>
<feature type="binding site" evidence="2">
    <location>
        <position position="441"/>
    </location>
    <ligand>
        <name>Na(+)</name>
        <dbReference type="ChEBI" id="CHEBI:29101"/>
    </ligand>
</feature>
<feature type="cross-link" description="1'-histidyl-3'-tyrosine (His-Tyr)" evidence="2">
    <location>
        <begin position="240"/>
        <end position="244"/>
    </location>
</feature>
<comment type="function">
    <text evidence="3">Component of the cytochrome c oxidase, the last enzyme in the mitochondrial electron transport chain which drives oxidative phosphorylation. The respiratory chain contains 3 multisubunit complexes succinate dehydrogenase (complex II, CII), ubiquinol-cytochrome c oxidoreductase (cytochrome b-c1 complex, complex III, CIII) and cytochrome c oxidase (complex IV, CIV), that cooperate to transfer electrons derived from NADH and succinate to molecular oxygen, creating an electrochemical gradient over the inner membrane that drives transmembrane transport and the ATP synthase. Cytochrome c oxidase is the component of the respiratory chain that catalyzes the reduction of oxygen to water. Electrons originating from reduced cytochrome c in the intermembrane space (IMS) are transferred via the dinuclear copper A center (CU(A)) of subunit 2 and heme A of subunit 1 to the active site in subunit 1, a binuclear center (BNC) formed by heme A3 and copper B (CU(B)). The BNC reduces molecular oxygen to 2 water molecules using 4 electrons from cytochrome c in the IMS and 4 protons from the mitochondrial matrix.</text>
</comment>
<comment type="catalytic activity">
    <reaction evidence="3">
        <text>4 Fe(II)-[cytochrome c] + O2 + 8 H(+)(in) = 4 Fe(III)-[cytochrome c] + 2 H2O + 4 H(+)(out)</text>
        <dbReference type="Rhea" id="RHEA:11436"/>
        <dbReference type="Rhea" id="RHEA-COMP:10350"/>
        <dbReference type="Rhea" id="RHEA-COMP:14399"/>
        <dbReference type="ChEBI" id="CHEBI:15377"/>
        <dbReference type="ChEBI" id="CHEBI:15378"/>
        <dbReference type="ChEBI" id="CHEBI:15379"/>
        <dbReference type="ChEBI" id="CHEBI:29033"/>
        <dbReference type="ChEBI" id="CHEBI:29034"/>
        <dbReference type="EC" id="7.1.1.9"/>
    </reaction>
    <physiologicalReaction direction="left-to-right" evidence="3">
        <dbReference type="Rhea" id="RHEA:11437"/>
    </physiologicalReaction>
</comment>
<comment type="cofactor">
    <cofactor evidence="2">
        <name>heme</name>
        <dbReference type="ChEBI" id="CHEBI:30413"/>
    </cofactor>
    <text evidence="2">Binds 2 heme A groups non-covalently per subunit.</text>
</comment>
<comment type="cofactor">
    <cofactor evidence="2">
        <name>Cu cation</name>
        <dbReference type="ChEBI" id="CHEBI:23378"/>
    </cofactor>
    <text evidence="2">Binds a copper B center.</text>
</comment>
<comment type="pathway">
    <text evidence="3">Energy metabolism; oxidative phosphorylation.</text>
</comment>
<comment type="subunit">
    <text evidence="1 2">Component of the cytochrome c oxidase (complex IV, CIV), a multisubunit enzyme composed of 14 subunits. The complex is composed of a catalytic core of 3 subunits MT-CO1, MT-CO2 and MT-CO3, encoded in the mitochondrial DNA, and 11 supernumerary subunits COX4I, COX5A, COX5B, COX6A, COX6B, COX6C, COX7A, COX7B, COX7C, COX8 and NDUFA4, which are encoded in the nuclear genome. The complex exists as a monomer or a dimer and forms supercomplexes (SCs) in the inner mitochondrial membrane with NADH-ubiquinone oxidoreductase (complex I, CI) and ubiquinol-cytochrome c oxidoreductase (cytochrome b-c1 complex, complex III, CIII), resulting in different assemblies (supercomplex SCI(1)III(2)IV(1) and megacomplex MCI(2)III(2)IV(2)) (By similarity). As a newly synthesized protein, rapidly incorporates into a multi-subunit assembly intermediate in the inner membrane, called MITRAC (mitochondrial translation regulation assembly intermediate of cytochrome c oxidase) complex, whose core components are COA3/MITRAC12 and COX14. Within the MITRAC complex, interacts with COA3 and with SMIM20/MITRAC7; the interaction with SMIM20 stabilizes the newly synthesized MT-CO1 and prevents its premature turnover. Interacts with TMEM177 in a COX20-dependent manner (By similarity).</text>
</comment>
<comment type="subcellular location">
    <subcellularLocation>
        <location evidence="2">Mitochondrion inner membrane</location>
        <topology evidence="2">Multi-pass membrane protein</topology>
    </subcellularLocation>
</comment>
<comment type="similarity">
    <text evidence="4">Belongs to the heme-copper respiratory oxidase family.</text>
</comment>
<dbReference type="EC" id="7.1.1.9"/>
<dbReference type="EMBL" id="X76364">
    <property type="protein sequence ID" value="CAA53965.1"/>
    <property type="molecule type" value="Genomic_DNA"/>
</dbReference>
<dbReference type="EMBL" id="X99772">
    <property type="protein sequence ID" value="CAA68108.1"/>
    <property type="molecule type" value="Genomic_DNA"/>
</dbReference>
<dbReference type="PIR" id="S45351">
    <property type="entry name" value="S45351"/>
</dbReference>
<dbReference type="SMR" id="Q36775"/>
<dbReference type="CTD" id="4512"/>
<dbReference type="OrthoDB" id="10002679at2759"/>
<dbReference type="UniPathway" id="UPA00705"/>
<dbReference type="Proteomes" id="UP000694546">
    <property type="component" value="Unplaced"/>
</dbReference>
<dbReference type="GO" id="GO:0005743">
    <property type="term" value="C:mitochondrial inner membrane"/>
    <property type="evidence" value="ECO:0007669"/>
    <property type="project" value="UniProtKB-SubCell"/>
</dbReference>
<dbReference type="GO" id="GO:0045277">
    <property type="term" value="C:respiratory chain complex IV"/>
    <property type="evidence" value="ECO:0000250"/>
    <property type="project" value="UniProtKB"/>
</dbReference>
<dbReference type="GO" id="GO:0004129">
    <property type="term" value="F:cytochrome-c oxidase activity"/>
    <property type="evidence" value="ECO:0007669"/>
    <property type="project" value="UniProtKB-EC"/>
</dbReference>
<dbReference type="GO" id="GO:0020037">
    <property type="term" value="F:heme binding"/>
    <property type="evidence" value="ECO:0007669"/>
    <property type="project" value="InterPro"/>
</dbReference>
<dbReference type="GO" id="GO:0046872">
    <property type="term" value="F:metal ion binding"/>
    <property type="evidence" value="ECO:0007669"/>
    <property type="project" value="UniProtKB-KW"/>
</dbReference>
<dbReference type="GO" id="GO:0015990">
    <property type="term" value="P:electron transport coupled proton transport"/>
    <property type="evidence" value="ECO:0007669"/>
    <property type="project" value="TreeGrafter"/>
</dbReference>
<dbReference type="GO" id="GO:0006123">
    <property type="term" value="P:mitochondrial electron transport, cytochrome c to oxygen"/>
    <property type="evidence" value="ECO:0007669"/>
    <property type="project" value="TreeGrafter"/>
</dbReference>
<dbReference type="CDD" id="cd01663">
    <property type="entry name" value="Cyt_c_Oxidase_I"/>
    <property type="match status" value="1"/>
</dbReference>
<dbReference type="FunFam" id="1.20.210.10:FF:000001">
    <property type="entry name" value="Cytochrome c oxidase subunit 1"/>
    <property type="match status" value="1"/>
</dbReference>
<dbReference type="Gene3D" id="1.20.210.10">
    <property type="entry name" value="Cytochrome c oxidase-like, subunit I domain"/>
    <property type="match status" value="1"/>
</dbReference>
<dbReference type="InterPro" id="IPR023616">
    <property type="entry name" value="Cyt_c_oxase-like_su1_dom"/>
</dbReference>
<dbReference type="InterPro" id="IPR036927">
    <property type="entry name" value="Cyt_c_oxase-like_su1_sf"/>
</dbReference>
<dbReference type="InterPro" id="IPR000883">
    <property type="entry name" value="Cyt_C_Oxase_1"/>
</dbReference>
<dbReference type="InterPro" id="IPR023615">
    <property type="entry name" value="Cyt_c_Oxase_su1_BS"/>
</dbReference>
<dbReference type="InterPro" id="IPR033944">
    <property type="entry name" value="Cyt_c_oxase_su1_dom"/>
</dbReference>
<dbReference type="PANTHER" id="PTHR10422">
    <property type="entry name" value="CYTOCHROME C OXIDASE SUBUNIT 1"/>
    <property type="match status" value="1"/>
</dbReference>
<dbReference type="PANTHER" id="PTHR10422:SF18">
    <property type="entry name" value="CYTOCHROME C OXIDASE SUBUNIT 1"/>
    <property type="match status" value="1"/>
</dbReference>
<dbReference type="Pfam" id="PF00115">
    <property type="entry name" value="COX1"/>
    <property type="match status" value="1"/>
</dbReference>
<dbReference type="PRINTS" id="PR01165">
    <property type="entry name" value="CYCOXIDASEI"/>
</dbReference>
<dbReference type="SUPFAM" id="SSF81442">
    <property type="entry name" value="Cytochrome c oxidase subunit I-like"/>
    <property type="match status" value="1"/>
</dbReference>
<dbReference type="PROSITE" id="PS50855">
    <property type="entry name" value="COX1"/>
    <property type="match status" value="1"/>
</dbReference>
<dbReference type="PROSITE" id="PS00077">
    <property type="entry name" value="COX1_CUB"/>
    <property type="match status" value="1"/>
</dbReference>
<sequence>MAITRWFFSTNHKDIGTLYLVFGAWAGMVGTALSLLIRAELSQPGALLGDDQIYNVIVTAHAFVMIFFMVMPLMIGGFGNWLIPLMIGAPDMAFPRMNNMSFWLLPPSFLLLLASSGVEAGAGTGWTLYPPLAGNLAHAGASVDLTIFSLHLAGISSILGAINFITTIINMKPPAISQYQTPLFVWAVLITAVLLLLSLPVLAAGITMLLTDRNLNTSFFDPAGGGDPILYQHLFWFFGHPEVYILILPGFGMISHIVAYYSGKKEPFGYMGMVWAMMAIGLLGFIVWAHHMFTVGMDVDTRAYFTSATMIIAIPTGVKVFSWLATLHGGSIKWETPLLWALGFIFLFTVGGLTGIVLANSSLDIVLHDTYYVVAHFHYVLSMGAVFAIMAAFVHWFPLFTGYTLHDTWTKIHFGVMFVGVNLTFFPQHFLGLAGMPRRYSDYPDAYTLWNTVSSIGSLISLMAVIMFLFILWEAFAAKREVMAVEMTMTNVEWLHGCPPPYHTFEEPAFVQIQTR</sequence>
<keyword id="KW-0106">Calcium</keyword>
<keyword id="KW-0186">Copper</keyword>
<keyword id="KW-0249">Electron transport</keyword>
<keyword id="KW-0349">Heme</keyword>
<keyword id="KW-0408">Iron</keyword>
<keyword id="KW-0460">Magnesium</keyword>
<keyword id="KW-0472">Membrane</keyword>
<keyword id="KW-0479">Metal-binding</keyword>
<keyword id="KW-0496">Mitochondrion</keyword>
<keyword id="KW-0999">Mitochondrion inner membrane</keyword>
<keyword id="KW-1185">Reference proteome</keyword>
<keyword id="KW-0679">Respiratory chain</keyword>
<keyword id="KW-0915">Sodium</keyword>
<keyword id="KW-1278">Translocase</keyword>
<keyword id="KW-0812">Transmembrane</keyword>
<keyword id="KW-1133">Transmembrane helix</keyword>
<keyword id="KW-0813">Transport</keyword>
<protein>
    <recommendedName>
        <fullName>Cytochrome c oxidase subunit 1</fullName>
        <ecNumber>7.1.1.9</ecNumber>
    </recommendedName>
    <alternativeName>
        <fullName>Cytochrome c oxidase polypeptide I</fullName>
    </alternativeName>
</protein>